<accession>B7N7R0</accession>
<name>CAIE_ECOLU</name>
<organism>
    <name type="scientific">Escherichia coli O17:K52:H18 (strain UMN026 / ExPEC)</name>
    <dbReference type="NCBI Taxonomy" id="585056"/>
    <lineage>
        <taxon>Bacteria</taxon>
        <taxon>Pseudomonadati</taxon>
        <taxon>Pseudomonadota</taxon>
        <taxon>Gammaproteobacteria</taxon>
        <taxon>Enterobacterales</taxon>
        <taxon>Enterobacteriaceae</taxon>
        <taxon>Escherichia</taxon>
    </lineage>
</organism>
<reference key="1">
    <citation type="journal article" date="2009" name="PLoS Genet.">
        <title>Organised genome dynamics in the Escherichia coli species results in highly diverse adaptive paths.</title>
        <authorList>
            <person name="Touchon M."/>
            <person name="Hoede C."/>
            <person name="Tenaillon O."/>
            <person name="Barbe V."/>
            <person name="Baeriswyl S."/>
            <person name="Bidet P."/>
            <person name="Bingen E."/>
            <person name="Bonacorsi S."/>
            <person name="Bouchier C."/>
            <person name="Bouvet O."/>
            <person name="Calteau A."/>
            <person name="Chiapello H."/>
            <person name="Clermont O."/>
            <person name="Cruveiller S."/>
            <person name="Danchin A."/>
            <person name="Diard M."/>
            <person name="Dossat C."/>
            <person name="Karoui M.E."/>
            <person name="Frapy E."/>
            <person name="Garry L."/>
            <person name="Ghigo J.M."/>
            <person name="Gilles A.M."/>
            <person name="Johnson J."/>
            <person name="Le Bouguenec C."/>
            <person name="Lescat M."/>
            <person name="Mangenot S."/>
            <person name="Martinez-Jehanne V."/>
            <person name="Matic I."/>
            <person name="Nassif X."/>
            <person name="Oztas S."/>
            <person name="Petit M.A."/>
            <person name="Pichon C."/>
            <person name="Rouy Z."/>
            <person name="Ruf C.S."/>
            <person name="Schneider D."/>
            <person name="Tourret J."/>
            <person name="Vacherie B."/>
            <person name="Vallenet D."/>
            <person name="Medigue C."/>
            <person name="Rocha E.P.C."/>
            <person name="Denamur E."/>
        </authorList>
    </citation>
    <scope>NUCLEOTIDE SEQUENCE [LARGE SCALE GENOMIC DNA]</scope>
    <source>
        <strain>UMN026 / ExPEC</strain>
    </source>
</reference>
<protein>
    <recommendedName>
        <fullName evidence="1">Carnitine operon protein CaiE</fullName>
    </recommendedName>
</protein>
<sequence>MSYYAFEGLIPVVHPTAFVHPSAVLIGDVIVGAGVYIGPLASLRGDYGRLIVQAGANIQDGCIMHGYCDTDTIVGENGHIGHGAILHGCVIGRDALVGMNSVIMDGAVIGEESIVAAMSFVKAGFRGEKRQLLMGTPARAVRSVSDDELHWKRLNTKEYQDLVGRCHASLHETQPLRQMEENRPRLQGTTDVMPKR</sequence>
<feature type="chain" id="PRO_1000200925" description="Carnitine operon protein CaiE">
    <location>
        <begin position="1"/>
        <end position="196"/>
    </location>
</feature>
<feature type="region of interest" description="Disordered" evidence="2">
    <location>
        <begin position="177"/>
        <end position="196"/>
    </location>
</feature>
<proteinExistence type="inferred from homology"/>
<gene>
    <name evidence="1" type="primary">caiE</name>
    <name type="ordered locus">ECUMN_0037</name>
</gene>
<dbReference type="EMBL" id="CU928163">
    <property type="protein sequence ID" value="CAR11260.1"/>
    <property type="molecule type" value="Genomic_DNA"/>
</dbReference>
<dbReference type="RefSeq" id="WP_000122881.1">
    <property type="nucleotide sequence ID" value="NC_011751.1"/>
</dbReference>
<dbReference type="RefSeq" id="YP_002410815.1">
    <property type="nucleotide sequence ID" value="NC_011751.1"/>
</dbReference>
<dbReference type="SMR" id="B7N7R0"/>
<dbReference type="STRING" id="585056.ECUMN_0037"/>
<dbReference type="KEGG" id="eum:ECUMN_0037"/>
<dbReference type="PATRIC" id="fig|585056.7.peg.222"/>
<dbReference type="HOGENOM" id="CLU_064827_4_2_6"/>
<dbReference type="UniPathway" id="UPA00117"/>
<dbReference type="Proteomes" id="UP000007097">
    <property type="component" value="Chromosome"/>
</dbReference>
<dbReference type="GO" id="GO:0016740">
    <property type="term" value="F:transferase activity"/>
    <property type="evidence" value="ECO:0007669"/>
    <property type="project" value="UniProtKB-KW"/>
</dbReference>
<dbReference type="GO" id="GO:0009437">
    <property type="term" value="P:carnitine metabolic process"/>
    <property type="evidence" value="ECO:0007669"/>
    <property type="project" value="UniProtKB-UniRule"/>
</dbReference>
<dbReference type="CDD" id="cd04745">
    <property type="entry name" value="LbH_paaY_like"/>
    <property type="match status" value="1"/>
</dbReference>
<dbReference type="FunFam" id="2.160.10.10:FF:000012">
    <property type="entry name" value="Carnitine operon protein CaiE"/>
    <property type="match status" value="1"/>
</dbReference>
<dbReference type="Gene3D" id="2.160.10.10">
    <property type="entry name" value="Hexapeptide repeat proteins"/>
    <property type="match status" value="1"/>
</dbReference>
<dbReference type="HAMAP" id="MF_01525">
    <property type="entry name" value="CaiE"/>
    <property type="match status" value="1"/>
</dbReference>
<dbReference type="InterPro" id="IPR023446">
    <property type="entry name" value="CaiE"/>
</dbReference>
<dbReference type="InterPro" id="IPR001451">
    <property type="entry name" value="Hexapep"/>
</dbReference>
<dbReference type="InterPro" id="IPR050484">
    <property type="entry name" value="Transf_Hexapept/Carb_Anhydrase"/>
</dbReference>
<dbReference type="InterPro" id="IPR011004">
    <property type="entry name" value="Trimer_LpxA-like_sf"/>
</dbReference>
<dbReference type="NCBIfam" id="NF010150">
    <property type="entry name" value="PRK13627.1"/>
    <property type="match status" value="1"/>
</dbReference>
<dbReference type="PANTHER" id="PTHR13061">
    <property type="entry name" value="DYNACTIN SUBUNIT P25"/>
    <property type="match status" value="1"/>
</dbReference>
<dbReference type="PANTHER" id="PTHR13061:SF29">
    <property type="entry name" value="GAMMA CARBONIC ANHYDRASE-LIKE 1, MITOCHONDRIAL-RELATED"/>
    <property type="match status" value="1"/>
</dbReference>
<dbReference type="Pfam" id="PF00132">
    <property type="entry name" value="Hexapep"/>
    <property type="match status" value="1"/>
</dbReference>
<dbReference type="SUPFAM" id="SSF51161">
    <property type="entry name" value="Trimeric LpxA-like enzymes"/>
    <property type="match status" value="1"/>
</dbReference>
<comment type="function">
    <text evidence="1">Overproduction of CaiE stimulates the activity of CaiB and CaiD.</text>
</comment>
<comment type="pathway">
    <text evidence="1">Amine and polyamine metabolism; carnitine metabolism.</text>
</comment>
<comment type="similarity">
    <text evidence="1">Belongs to the transferase hexapeptide repeat family.</text>
</comment>
<evidence type="ECO:0000255" key="1">
    <source>
        <dbReference type="HAMAP-Rule" id="MF_01525"/>
    </source>
</evidence>
<evidence type="ECO:0000256" key="2">
    <source>
        <dbReference type="SAM" id="MobiDB-lite"/>
    </source>
</evidence>
<keyword id="KW-0677">Repeat</keyword>
<keyword id="KW-0808">Transferase</keyword>